<reference key="1">
    <citation type="submission" date="2007-06" db="EMBL/GenBank/DDBJ databases">
        <title>Complete sequence of Clostridium beijerinckii NCIMB 8052.</title>
        <authorList>
            <consortium name="US DOE Joint Genome Institute"/>
            <person name="Copeland A."/>
            <person name="Lucas S."/>
            <person name="Lapidus A."/>
            <person name="Barry K."/>
            <person name="Detter J.C."/>
            <person name="Glavina del Rio T."/>
            <person name="Hammon N."/>
            <person name="Israni S."/>
            <person name="Dalin E."/>
            <person name="Tice H."/>
            <person name="Pitluck S."/>
            <person name="Sims D."/>
            <person name="Brettin T."/>
            <person name="Bruce D."/>
            <person name="Tapia R."/>
            <person name="Brainard J."/>
            <person name="Schmutz J."/>
            <person name="Larimer F."/>
            <person name="Land M."/>
            <person name="Hauser L."/>
            <person name="Kyrpides N."/>
            <person name="Mikhailova N."/>
            <person name="Bennet G."/>
            <person name="Cann I."/>
            <person name="Chen J.-S."/>
            <person name="Contreras A.L."/>
            <person name="Jones D."/>
            <person name="Kashket E."/>
            <person name="Mitchell W."/>
            <person name="Stoddard S."/>
            <person name="Schwarz W."/>
            <person name="Qureshi N."/>
            <person name="Young M."/>
            <person name="Shi Z."/>
            <person name="Ezeji T."/>
            <person name="White B."/>
            <person name="Blaschek H."/>
            <person name="Richardson P."/>
        </authorList>
    </citation>
    <scope>NUCLEOTIDE SEQUENCE [LARGE SCALE GENOMIC DNA]</scope>
    <source>
        <strain>ATCC 51743 / NCIMB 8052</strain>
    </source>
</reference>
<protein>
    <recommendedName>
        <fullName evidence="1">Phosphopentomutase</fullName>
        <ecNumber evidence="1">5.4.2.7</ecNumber>
    </recommendedName>
    <alternativeName>
        <fullName evidence="1">Phosphodeoxyribomutase</fullName>
    </alternativeName>
</protein>
<name>DEOB_CLOB8</name>
<evidence type="ECO:0000255" key="1">
    <source>
        <dbReference type="HAMAP-Rule" id="MF_00740"/>
    </source>
</evidence>
<organism>
    <name type="scientific">Clostridium beijerinckii (strain ATCC 51743 / NCIMB 8052)</name>
    <name type="common">Clostridium acetobutylicum</name>
    <dbReference type="NCBI Taxonomy" id="290402"/>
    <lineage>
        <taxon>Bacteria</taxon>
        <taxon>Bacillati</taxon>
        <taxon>Bacillota</taxon>
        <taxon>Clostridia</taxon>
        <taxon>Eubacteriales</taxon>
        <taxon>Clostridiaceae</taxon>
        <taxon>Clostridium</taxon>
    </lineage>
</organism>
<sequence>MKKYNRIFTIVIDSLGIGEMSDSKEYGDVNVDTLRHISESVDEFKIPNLQKLGLANLHPIKHVEAVEKPLAHFMKMREASVGKDTMTGHWEMMGLKIETPFQTFTDTGFPQELLDELEKRTGHKIVGNKSASGTEILDELGEHQIKTGDMIVYTSADSVLQICGHEETFGLDELYRCCEIARELTLKDEWKVGRVIARPYLGMKKGEFKRTSNRHDYALKPYGATALNALKDNGFASISVGKINDIFDGEGITESNKSKSSVHGMEQTLEIMDKEFKGSCFVNLVDFDALWGHRRNPVGYAEELEKFDVNLGKVLDKLKEDDLLIITADHGNDPTYKGTDHTREHVPFLAYSPSMTESGLMETSDSFAAIGATIAENFGVKMPENTIGESVLSKLV</sequence>
<gene>
    <name evidence="1" type="primary">deoB</name>
    <name type="ordered locus">Cbei_3127</name>
</gene>
<feature type="chain" id="PRO_1000083434" description="Phosphopentomutase">
    <location>
        <begin position="1"/>
        <end position="396"/>
    </location>
</feature>
<feature type="binding site" evidence="1">
    <location>
        <position position="13"/>
    </location>
    <ligand>
        <name>Mn(2+)</name>
        <dbReference type="ChEBI" id="CHEBI:29035"/>
        <label>1</label>
    </ligand>
</feature>
<feature type="binding site" evidence="1">
    <location>
        <position position="288"/>
    </location>
    <ligand>
        <name>Mn(2+)</name>
        <dbReference type="ChEBI" id="CHEBI:29035"/>
        <label>2</label>
    </ligand>
</feature>
<feature type="binding site" evidence="1">
    <location>
        <position position="293"/>
    </location>
    <ligand>
        <name>Mn(2+)</name>
        <dbReference type="ChEBI" id="CHEBI:29035"/>
        <label>2</label>
    </ligand>
</feature>
<feature type="binding site" evidence="1">
    <location>
        <position position="329"/>
    </location>
    <ligand>
        <name>Mn(2+)</name>
        <dbReference type="ChEBI" id="CHEBI:29035"/>
        <label>1</label>
    </ligand>
</feature>
<feature type="binding site" evidence="1">
    <location>
        <position position="330"/>
    </location>
    <ligand>
        <name>Mn(2+)</name>
        <dbReference type="ChEBI" id="CHEBI:29035"/>
        <label>1</label>
    </ligand>
</feature>
<feature type="binding site" evidence="1">
    <location>
        <position position="341"/>
    </location>
    <ligand>
        <name>Mn(2+)</name>
        <dbReference type="ChEBI" id="CHEBI:29035"/>
        <label>2</label>
    </ligand>
</feature>
<keyword id="KW-0963">Cytoplasm</keyword>
<keyword id="KW-0413">Isomerase</keyword>
<keyword id="KW-0464">Manganese</keyword>
<keyword id="KW-0479">Metal-binding</keyword>
<dbReference type="EC" id="5.4.2.7" evidence="1"/>
<dbReference type="EMBL" id="CP000721">
    <property type="protein sequence ID" value="ABR35263.1"/>
    <property type="molecule type" value="Genomic_DNA"/>
</dbReference>
<dbReference type="RefSeq" id="WP_012059314.1">
    <property type="nucleotide sequence ID" value="NC_009617.1"/>
</dbReference>
<dbReference type="SMR" id="A6LY33"/>
<dbReference type="KEGG" id="cbe:Cbei_3127"/>
<dbReference type="eggNOG" id="COG1015">
    <property type="taxonomic scope" value="Bacteria"/>
</dbReference>
<dbReference type="HOGENOM" id="CLU_053861_0_0_9"/>
<dbReference type="UniPathway" id="UPA00002">
    <property type="reaction ID" value="UER00467"/>
</dbReference>
<dbReference type="Proteomes" id="UP000000565">
    <property type="component" value="Chromosome"/>
</dbReference>
<dbReference type="GO" id="GO:0005829">
    <property type="term" value="C:cytosol"/>
    <property type="evidence" value="ECO:0007669"/>
    <property type="project" value="TreeGrafter"/>
</dbReference>
<dbReference type="GO" id="GO:0000287">
    <property type="term" value="F:magnesium ion binding"/>
    <property type="evidence" value="ECO:0007669"/>
    <property type="project" value="InterPro"/>
</dbReference>
<dbReference type="GO" id="GO:0030145">
    <property type="term" value="F:manganese ion binding"/>
    <property type="evidence" value="ECO:0007669"/>
    <property type="project" value="UniProtKB-UniRule"/>
</dbReference>
<dbReference type="GO" id="GO:0008973">
    <property type="term" value="F:phosphopentomutase activity"/>
    <property type="evidence" value="ECO:0007669"/>
    <property type="project" value="UniProtKB-UniRule"/>
</dbReference>
<dbReference type="GO" id="GO:0006018">
    <property type="term" value="P:2-deoxyribose 1-phosphate catabolic process"/>
    <property type="evidence" value="ECO:0007669"/>
    <property type="project" value="UniProtKB-UniRule"/>
</dbReference>
<dbReference type="GO" id="GO:0006015">
    <property type="term" value="P:5-phosphoribose 1-diphosphate biosynthetic process"/>
    <property type="evidence" value="ECO:0007669"/>
    <property type="project" value="UniProtKB-UniPathway"/>
</dbReference>
<dbReference type="GO" id="GO:0043094">
    <property type="term" value="P:metabolic compound salvage"/>
    <property type="evidence" value="ECO:0007669"/>
    <property type="project" value="InterPro"/>
</dbReference>
<dbReference type="GO" id="GO:0009117">
    <property type="term" value="P:nucleotide metabolic process"/>
    <property type="evidence" value="ECO:0007669"/>
    <property type="project" value="InterPro"/>
</dbReference>
<dbReference type="CDD" id="cd16009">
    <property type="entry name" value="PPM"/>
    <property type="match status" value="1"/>
</dbReference>
<dbReference type="FunFam" id="3.30.70.1250:FF:000001">
    <property type="entry name" value="Phosphopentomutase"/>
    <property type="match status" value="1"/>
</dbReference>
<dbReference type="Gene3D" id="3.40.720.10">
    <property type="entry name" value="Alkaline Phosphatase, subunit A"/>
    <property type="match status" value="1"/>
</dbReference>
<dbReference type="Gene3D" id="3.30.70.1250">
    <property type="entry name" value="Phosphopentomutase"/>
    <property type="match status" value="1"/>
</dbReference>
<dbReference type="HAMAP" id="MF_00740">
    <property type="entry name" value="Phosphopentomut"/>
    <property type="match status" value="1"/>
</dbReference>
<dbReference type="InterPro" id="IPR017850">
    <property type="entry name" value="Alkaline_phosphatase_core_sf"/>
</dbReference>
<dbReference type="InterPro" id="IPR010045">
    <property type="entry name" value="DeoB"/>
</dbReference>
<dbReference type="InterPro" id="IPR006124">
    <property type="entry name" value="Metalloenzyme"/>
</dbReference>
<dbReference type="InterPro" id="IPR024052">
    <property type="entry name" value="Phosphopentomutase_DeoB_cap_sf"/>
</dbReference>
<dbReference type="NCBIfam" id="TIGR01696">
    <property type="entry name" value="deoB"/>
    <property type="match status" value="1"/>
</dbReference>
<dbReference type="NCBIfam" id="NF003766">
    <property type="entry name" value="PRK05362.1"/>
    <property type="match status" value="1"/>
</dbReference>
<dbReference type="PANTHER" id="PTHR21110">
    <property type="entry name" value="PHOSPHOPENTOMUTASE"/>
    <property type="match status" value="1"/>
</dbReference>
<dbReference type="PANTHER" id="PTHR21110:SF0">
    <property type="entry name" value="PHOSPHOPENTOMUTASE"/>
    <property type="match status" value="1"/>
</dbReference>
<dbReference type="Pfam" id="PF01676">
    <property type="entry name" value="Metalloenzyme"/>
    <property type="match status" value="1"/>
</dbReference>
<dbReference type="PIRSF" id="PIRSF001491">
    <property type="entry name" value="Ppentomutase"/>
    <property type="match status" value="1"/>
</dbReference>
<dbReference type="SUPFAM" id="SSF53649">
    <property type="entry name" value="Alkaline phosphatase-like"/>
    <property type="match status" value="1"/>
</dbReference>
<dbReference type="SUPFAM" id="SSF143856">
    <property type="entry name" value="DeoB insert domain-like"/>
    <property type="match status" value="1"/>
</dbReference>
<accession>A6LY33</accession>
<proteinExistence type="inferred from homology"/>
<comment type="function">
    <text evidence="1">Isomerase that catalyzes the conversion of deoxy-ribose 1-phosphate (dRib-1-P) and ribose 1-phosphate (Rib-1-P) to deoxy-ribose 5-phosphate (dRib-5-P) and ribose 5-phosphate (Rib-5-P), respectively.</text>
</comment>
<comment type="catalytic activity">
    <reaction evidence="1">
        <text>2-deoxy-alpha-D-ribose 1-phosphate = 2-deoxy-D-ribose 5-phosphate</text>
        <dbReference type="Rhea" id="RHEA:27658"/>
        <dbReference type="ChEBI" id="CHEBI:57259"/>
        <dbReference type="ChEBI" id="CHEBI:62877"/>
        <dbReference type="EC" id="5.4.2.7"/>
    </reaction>
</comment>
<comment type="catalytic activity">
    <reaction evidence="1">
        <text>alpha-D-ribose 1-phosphate = D-ribose 5-phosphate</text>
        <dbReference type="Rhea" id="RHEA:18793"/>
        <dbReference type="ChEBI" id="CHEBI:57720"/>
        <dbReference type="ChEBI" id="CHEBI:78346"/>
        <dbReference type="EC" id="5.4.2.7"/>
    </reaction>
</comment>
<comment type="cofactor">
    <cofactor evidence="1">
        <name>Mn(2+)</name>
        <dbReference type="ChEBI" id="CHEBI:29035"/>
    </cofactor>
    <text evidence="1">Binds 2 manganese ions.</text>
</comment>
<comment type="pathway">
    <text evidence="1">Carbohydrate degradation; 2-deoxy-D-ribose 1-phosphate degradation; D-glyceraldehyde 3-phosphate and acetaldehyde from 2-deoxy-alpha-D-ribose 1-phosphate: step 1/2.</text>
</comment>
<comment type="subcellular location">
    <subcellularLocation>
        <location evidence="1">Cytoplasm</location>
    </subcellularLocation>
</comment>
<comment type="similarity">
    <text evidence="1">Belongs to the phosphopentomutase family.</text>
</comment>